<evidence type="ECO:0000255" key="1">
    <source>
        <dbReference type="HAMAP-Rule" id="MF_01326"/>
    </source>
</evidence>
<evidence type="ECO:0000305" key="2"/>
<sequence>MKLKIKKGATVQVITGSDKGKKGTVIAVDANAMKIQVQGVKVQTHYDKKDGLLKKEGFIDYSNVKLVEAASKEKKTSKKATKSKSA</sequence>
<reference key="1">
    <citation type="journal article" date="2004" name="Science">
        <title>A predator unmasked: life cycle of Bdellovibrio bacteriovorus from a genomic perspective.</title>
        <authorList>
            <person name="Rendulic S."/>
            <person name="Jagtap P."/>
            <person name="Rosinus A."/>
            <person name="Eppinger M."/>
            <person name="Baar C."/>
            <person name="Lanz C."/>
            <person name="Keller H."/>
            <person name="Lambert C."/>
            <person name="Evans K.J."/>
            <person name="Goesmann A."/>
            <person name="Meyer F."/>
            <person name="Sockett R.E."/>
            <person name="Schuster S.C."/>
        </authorList>
    </citation>
    <scope>NUCLEOTIDE SEQUENCE [LARGE SCALE GENOMIC DNA]</scope>
    <source>
        <strain>ATCC 15356 / DSM 50701 / NCIMB 9529 / HD100</strain>
    </source>
</reference>
<gene>
    <name evidence="1" type="primary">rplX</name>
    <name type="ordered locus">Bd0941</name>
</gene>
<name>RL24_BDEBA</name>
<protein>
    <recommendedName>
        <fullName evidence="1">Large ribosomal subunit protein uL24</fullName>
    </recommendedName>
    <alternativeName>
        <fullName evidence="2">50S ribosomal protein L24</fullName>
    </alternativeName>
</protein>
<dbReference type="EMBL" id="BX842648">
    <property type="protein sequence ID" value="CAE78881.1"/>
    <property type="molecule type" value="Genomic_DNA"/>
</dbReference>
<dbReference type="RefSeq" id="WP_011163483.1">
    <property type="nucleotide sequence ID" value="NC_005363.1"/>
</dbReference>
<dbReference type="SMR" id="Q6MPB7"/>
<dbReference type="STRING" id="264462.Bd0941"/>
<dbReference type="GeneID" id="93012013"/>
<dbReference type="KEGG" id="bba:Bd0941"/>
<dbReference type="eggNOG" id="COG0198">
    <property type="taxonomic scope" value="Bacteria"/>
</dbReference>
<dbReference type="HOGENOM" id="CLU_093315_3_0_7"/>
<dbReference type="Proteomes" id="UP000008080">
    <property type="component" value="Chromosome"/>
</dbReference>
<dbReference type="GO" id="GO:1990904">
    <property type="term" value="C:ribonucleoprotein complex"/>
    <property type="evidence" value="ECO:0007669"/>
    <property type="project" value="UniProtKB-KW"/>
</dbReference>
<dbReference type="GO" id="GO:0005840">
    <property type="term" value="C:ribosome"/>
    <property type="evidence" value="ECO:0007669"/>
    <property type="project" value="UniProtKB-KW"/>
</dbReference>
<dbReference type="GO" id="GO:0019843">
    <property type="term" value="F:rRNA binding"/>
    <property type="evidence" value="ECO:0007669"/>
    <property type="project" value="UniProtKB-UniRule"/>
</dbReference>
<dbReference type="GO" id="GO:0003735">
    <property type="term" value="F:structural constituent of ribosome"/>
    <property type="evidence" value="ECO:0007669"/>
    <property type="project" value="InterPro"/>
</dbReference>
<dbReference type="GO" id="GO:0006412">
    <property type="term" value="P:translation"/>
    <property type="evidence" value="ECO:0007669"/>
    <property type="project" value="UniProtKB-UniRule"/>
</dbReference>
<dbReference type="CDD" id="cd06089">
    <property type="entry name" value="KOW_RPL26"/>
    <property type="match status" value="1"/>
</dbReference>
<dbReference type="Gene3D" id="2.30.30.30">
    <property type="match status" value="1"/>
</dbReference>
<dbReference type="HAMAP" id="MF_01326_B">
    <property type="entry name" value="Ribosomal_uL24_B"/>
    <property type="match status" value="1"/>
</dbReference>
<dbReference type="InterPro" id="IPR005824">
    <property type="entry name" value="KOW"/>
</dbReference>
<dbReference type="InterPro" id="IPR014722">
    <property type="entry name" value="Rib_uL2_dom2"/>
</dbReference>
<dbReference type="InterPro" id="IPR003256">
    <property type="entry name" value="Ribosomal_uL24"/>
</dbReference>
<dbReference type="InterPro" id="IPR041988">
    <property type="entry name" value="Ribosomal_uL24_KOW"/>
</dbReference>
<dbReference type="InterPro" id="IPR008991">
    <property type="entry name" value="Translation_prot_SH3-like_sf"/>
</dbReference>
<dbReference type="PANTHER" id="PTHR12903">
    <property type="entry name" value="MITOCHONDRIAL RIBOSOMAL PROTEIN L24"/>
    <property type="match status" value="1"/>
</dbReference>
<dbReference type="Pfam" id="PF00467">
    <property type="entry name" value="KOW"/>
    <property type="match status" value="1"/>
</dbReference>
<dbReference type="SMART" id="SM00739">
    <property type="entry name" value="KOW"/>
    <property type="match status" value="1"/>
</dbReference>
<dbReference type="SUPFAM" id="SSF50104">
    <property type="entry name" value="Translation proteins SH3-like domain"/>
    <property type="match status" value="1"/>
</dbReference>
<proteinExistence type="inferred from homology"/>
<organism>
    <name type="scientific">Bdellovibrio bacteriovorus (strain ATCC 15356 / DSM 50701 / NCIMB 9529 / HD100)</name>
    <dbReference type="NCBI Taxonomy" id="264462"/>
    <lineage>
        <taxon>Bacteria</taxon>
        <taxon>Pseudomonadati</taxon>
        <taxon>Bdellovibrionota</taxon>
        <taxon>Bdellovibrionia</taxon>
        <taxon>Bdellovibrionales</taxon>
        <taxon>Pseudobdellovibrionaceae</taxon>
        <taxon>Bdellovibrio</taxon>
    </lineage>
</organism>
<accession>Q6MPB7</accession>
<feature type="chain" id="PRO_0000355648" description="Large ribosomal subunit protein uL24">
    <location>
        <begin position="1"/>
        <end position="86"/>
    </location>
</feature>
<keyword id="KW-1185">Reference proteome</keyword>
<keyword id="KW-0687">Ribonucleoprotein</keyword>
<keyword id="KW-0689">Ribosomal protein</keyword>
<keyword id="KW-0694">RNA-binding</keyword>
<keyword id="KW-0699">rRNA-binding</keyword>
<comment type="function">
    <text evidence="1">One of two assembly initiator proteins, it binds directly to the 5'-end of the 23S rRNA, where it nucleates assembly of the 50S subunit.</text>
</comment>
<comment type="function">
    <text evidence="1">One of the proteins that surrounds the polypeptide exit tunnel on the outside of the subunit.</text>
</comment>
<comment type="subunit">
    <text evidence="1">Part of the 50S ribosomal subunit.</text>
</comment>
<comment type="similarity">
    <text evidence="1">Belongs to the universal ribosomal protein uL24 family.</text>
</comment>